<name>TRUA_HYDS0</name>
<protein>
    <recommendedName>
        <fullName evidence="1">tRNA pseudouridine synthase A</fullName>
        <ecNumber evidence="1">5.4.99.12</ecNumber>
    </recommendedName>
    <alternativeName>
        <fullName evidence="1">tRNA pseudouridine(38-40) synthase</fullName>
    </alternativeName>
    <alternativeName>
        <fullName evidence="1">tRNA pseudouridylate synthase I</fullName>
    </alternativeName>
    <alternativeName>
        <fullName evidence="1">tRNA-uridine isomerase I</fullName>
    </alternativeName>
</protein>
<sequence length="247" mass="29071">MKNYKFTISFVGTNYSGWQYQPNVPTIQNEVEEKLYYIVNKKKPIKQKIRAIGCSRTDKGVHAIEFVFNVKMEFDKDLNFLRKALNSALPKDIKIHNIEEVPLEFNSRFDALKKTYIYKLFFDEKNSPFFQDRAMLVYKPTDLGKMMEISHLFLGYKDFRGFTKELEDENGYCSVENITFKVDYPLVEISITANRFLRYMVRRMVGTMLSYAQGLISIDDVNDFLKAKRVSNHTAKAHGLYLKKVYY</sequence>
<reference key="1">
    <citation type="journal article" date="2009" name="J. Bacteriol.">
        <title>Complete and draft genome sequences of six members of the Aquificales.</title>
        <authorList>
            <person name="Reysenbach A.-L."/>
            <person name="Hamamura N."/>
            <person name="Podar M."/>
            <person name="Griffiths E."/>
            <person name="Ferreira S."/>
            <person name="Hochstein R."/>
            <person name="Heidelberg J."/>
            <person name="Johnson J."/>
            <person name="Mead D."/>
            <person name="Pohorille A."/>
            <person name="Sarmiento M."/>
            <person name="Schweighofer K."/>
            <person name="Seshadri R."/>
            <person name="Voytek M.A."/>
        </authorList>
    </citation>
    <scope>NUCLEOTIDE SEQUENCE [LARGE SCALE GENOMIC DNA]</scope>
    <source>
        <strain>Y04AAS1</strain>
    </source>
</reference>
<organism>
    <name type="scientific">Hydrogenobaculum sp. (strain Y04AAS1)</name>
    <dbReference type="NCBI Taxonomy" id="380749"/>
    <lineage>
        <taxon>Bacteria</taxon>
        <taxon>Pseudomonadati</taxon>
        <taxon>Aquificota</taxon>
        <taxon>Aquificia</taxon>
        <taxon>Aquificales</taxon>
        <taxon>Aquificaceae</taxon>
        <taxon>Hydrogenobaculum</taxon>
    </lineage>
</organism>
<feature type="chain" id="PRO_1000097750" description="tRNA pseudouridine synthase A">
    <location>
        <begin position="1"/>
        <end position="247"/>
    </location>
</feature>
<feature type="active site" description="Nucleophile" evidence="1">
    <location>
        <position position="58"/>
    </location>
</feature>
<feature type="binding site" evidence="1">
    <location>
        <position position="116"/>
    </location>
    <ligand>
        <name>substrate</name>
    </ligand>
</feature>
<proteinExistence type="inferred from homology"/>
<gene>
    <name evidence="1" type="primary">truA</name>
    <name type="ordered locus">HY04AAS1_1064</name>
</gene>
<evidence type="ECO:0000255" key="1">
    <source>
        <dbReference type="HAMAP-Rule" id="MF_00171"/>
    </source>
</evidence>
<dbReference type="EC" id="5.4.99.12" evidence="1"/>
<dbReference type="EMBL" id="CP001130">
    <property type="protein sequence ID" value="ACG57750.1"/>
    <property type="molecule type" value="Genomic_DNA"/>
</dbReference>
<dbReference type="RefSeq" id="WP_012514106.1">
    <property type="nucleotide sequence ID" value="NC_011126.1"/>
</dbReference>
<dbReference type="SMR" id="B4U9D9"/>
<dbReference type="STRING" id="380749.HY04AAS1_1064"/>
<dbReference type="KEGG" id="hya:HY04AAS1_1064"/>
<dbReference type="eggNOG" id="COG0101">
    <property type="taxonomic scope" value="Bacteria"/>
</dbReference>
<dbReference type="HOGENOM" id="CLU_014673_0_1_0"/>
<dbReference type="OrthoDB" id="9811823at2"/>
<dbReference type="GO" id="GO:0003723">
    <property type="term" value="F:RNA binding"/>
    <property type="evidence" value="ECO:0007669"/>
    <property type="project" value="InterPro"/>
</dbReference>
<dbReference type="GO" id="GO:0160147">
    <property type="term" value="F:tRNA pseudouridine(38-40) synthase activity"/>
    <property type="evidence" value="ECO:0007669"/>
    <property type="project" value="UniProtKB-EC"/>
</dbReference>
<dbReference type="GO" id="GO:0031119">
    <property type="term" value="P:tRNA pseudouridine synthesis"/>
    <property type="evidence" value="ECO:0007669"/>
    <property type="project" value="UniProtKB-UniRule"/>
</dbReference>
<dbReference type="CDD" id="cd02570">
    <property type="entry name" value="PseudoU_synth_EcTruA"/>
    <property type="match status" value="1"/>
</dbReference>
<dbReference type="Gene3D" id="3.30.70.660">
    <property type="entry name" value="Pseudouridine synthase I, catalytic domain, C-terminal subdomain"/>
    <property type="match status" value="1"/>
</dbReference>
<dbReference type="Gene3D" id="3.30.70.580">
    <property type="entry name" value="Pseudouridine synthase I, catalytic domain, N-terminal subdomain"/>
    <property type="match status" value="1"/>
</dbReference>
<dbReference type="HAMAP" id="MF_00171">
    <property type="entry name" value="TruA"/>
    <property type="match status" value="1"/>
</dbReference>
<dbReference type="InterPro" id="IPR020103">
    <property type="entry name" value="PsdUridine_synth_cat_dom_sf"/>
</dbReference>
<dbReference type="InterPro" id="IPR001406">
    <property type="entry name" value="PsdUridine_synth_TruA"/>
</dbReference>
<dbReference type="InterPro" id="IPR020097">
    <property type="entry name" value="PsdUridine_synth_TruA_a/b_dom"/>
</dbReference>
<dbReference type="InterPro" id="IPR020095">
    <property type="entry name" value="PsdUridine_synth_TruA_C"/>
</dbReference>
<dbReference type="InterPro" id="IPR020094">
    <property type="entry name" value="TruA/RsuA/RluB/E/F_N"/>
</dbReference>
<dbReference type="NCBIfam" id="TIGR00071">
    <property type="entry name" value="hisT_truA"/>
    <property type="match status" value="1"/>
</dbReference>
<dbReference type="PANTHER" id="PTHR11142">
    <property type="entry name" value="PSEUDOURIDYLATE SYNTHASE"/>
    <property type="match status" value="1"/>
</dbReference>
<dbReference type="PANTHER" id="PTHR11142:SF0">
    <property type="entry name" value="TRNA PSEUDOURIDINE SYNTHASE-LIKE 1"/>
    <property type="match status" value="1"/>
</dbReference>
<dbReference type="Pfam" id="PF01416">
    <property type="entry name" value="PseudoU_synth_1"/>
    <property type="match status" value="2"/>
</dbReference>
<dbReference type="PIRSF" id="PIRSF001430">
    <property type="entry name" value="tRNA_psdUrid_synth"/>
    <property type="match status" value="1"/>
</dbReference>
<dbReference type="SUPFAM" id="SSF55120">
    <property type="entry name" value="Pseudouridine synthase"/>
    <property type="match status" value="1"/>
</dbReference>
<keyword id="KW-0413">Isomerase</keyword>
<keyword id="KW-0819">tRNA processing</keyword>
<comment type="function">
    <text evidence="1">Formation of pseudouridine at positions 38, 39 and 40 in the anticodon stem and loop of transfer RNAs.</text>
</comment>
<comment type="catalytic activity">
    <reaction evidence="1">
        <text>uridine(38/39/40) in tRNA = pseudouridine(38/39/40) in tRNA</text>
        <dbReference type="Rhea" id="RHEA:22376"/>
        <dbReference type="Rhea" id="RHEA-COMP:10085"/>
        <dbReference type="Rhea" id="RHEA-COMP:10087"/>
        <dbReference type="ChEBI" id="CHEBI:65314"/>
        <dbReference type="ChEBI" id="CHEBI:65315"/>
        <dbReference type="EC" id="5.4.99.12"/>
    </reaction>
</comment>
<comment type="subunit">
    <text evidence="1">Homodimer.</text>
</comment>
<comment type="similarity">
    <text evidence="1">Belongs to the tRNA pseudouridine synthase TruA family.</text>
</comment>
<accession>B4U9D9</accession>